<gene>
    <name evidence="1" type="primary">rlmH</name>
    <name type="ordered locus">Kole_1718</name>
</gene>
<protein>
    <recommendedName>
        <fullName evidence="1">Ribosomal RNA large subunit methyltransferase H</fullName>
        <ecNumber evidence="1">2.1.1.177</ecNumber>
    </recommendedName>
    <alternativeName>
        <fullName evidence="1">23S rRNA (pseudouridine1915-N3)-methyltransferase</fullName>
    </alternativeName>
    <alternativeName>
        <fullName evidence="1">23S rRNA m3Psi1915 methyltransferase</fullName>
    </alternativeName>
    <alternativeName>
        <fullName evidence="1">rRNA (pseudouridine-N3-)-methyltransferase RlmH</fullName>
    </alternativeName>
</protein>
<comment type="function">
    <text evidence="1">Specifically methylates the pseudouridine at position 1915 (m3Psi1915) in 23S rRNA.</text>
</comment>
<comment type="catalytic activity">
    <reaction evidence="1">
        <text>pseudouridine(1915) in 23S rRNA + S-adenosyl-L-methionine = N(3)-methylpseudouridine(1915) in 23S rRNA + S-adenosyl-L-homocysteine + H(+)</text>
        <dbReference type="Rhea" id="RHEA:42752"/>
        <dbReference type="Rhea" id="RHEA-COMP:10221"/>
        <dbReference type="Rhea" id="RHEA-COMP:10222"/>
        <dbReference type="ChEBI" id="CHEBI:15378"/>
        <dbReference type="ChEBI" id="CHEBI:57856"/>
        <dbReference type="ChEBI" id="CHEBI:59789"/>
        <dbReference type="ChEBI" id="CHEBI:65314"/>
        <dbReference type="ChEBI" id="CHEBI:74486"/>
        <dbReference type="EC" id="2.1.1.177"/>
    </reaction>
</comment>
<comment type="subunit">
    <text evidence="1">Homodimer.</text>
</comment>
<comment type="subcellular location">
    <subcellularLocation>
        <location evidence="1">Cytoplasm</location>
    </subcellularLocation>
</comment>
<comment type="similarity">
    <text evidence="1">Belongs to the RNA methyltransferase RlmH family.</text>
</comment>
<evidence type="ECO:0000255" key="1">
    <source>
        <dbReference type="HAMAP-Rule" id="MF_00658"/>
    </source>
</evidence>
<reference key="1">
    <citation type="submission" date="2009-06" db="EMBL/GenBank/DDBJ databases">
        <title>Complete sequence of Thermotogales bacterium TBF 19.5.1.</title>
        <authorList>
            <consortium name="US DOE Joint Genome Institute"/>
            <person name="Lucas S."/>
            <person name="Copeland A."/>
            <person name="Lapidus A."/>
            <person name="Glavina del Rio T."/>
            <person name="Tice H."/>
            <person name="Bruce D."/>
            <person name="Goodwin L."/>
            <person name="Pitluck S."/>
            <person name="Chertkov O."/>
            <person name="Brettin T."/>
            <person name="Detter J.C."/>
            <person name="Han C."/>
            <person name="Schmutz J."/>
            <person name="Larimer F."/>
            <person name="Land M."/>
            <person name="Hauser L."/>
            <person name="Kyrpides N."/>
            <person name="Ovchinnikova G."/>
            <person name="Noll K."/>
        </authorList>
    </citation>
    <scope>NUCLEOTIDE SEQUENCE [LARGE SCALE GENOMIC DNA]</scope>
    <source>
        <strain>ATCC BAA-1733 / DSM 21960 / TBF 19.5.1</strain>
    </source>
</reference>
<keyword id="KW-0963">Cytoplasm</keyword>
<keyword id="KW-0489">Methyltransferase</keyword>
<keyword id="KW-1185">Reference proteome</keyword>
<keyword id="KW-0698">rRNA processing</keyword>
<keyword id="KW-0949">S-adenosyl-L-methionine</keyword>
<keyword id="KW-0808">Transferase</keyword>
<dbReference type="EC" id="2.1.1.177" evidence="1"/>
<dbReference type="EMBL" id="CP001634">
    <property type="protein sequence ID" value="ACR80404.1"/>
    <property type="molecule type" value="Genomic_DNA"/>
</dbReference>
<dbReference type="RefSeq" id="WP_015869048.1">
    <property type="nucleotide sequence ID" value="NC_012785.1"/>
</dbReference>
<dbReference type="SMR" id="C5CFQ6"/>
<dbReference type="STRING" id="521045.Kole_1718"/>
<dbReference type="KEGG" id="kol:Kole_1718"/>
<dbReference type="eggNOG" id="COG1576">
    <property type="taxonomic scope" value="Bacteria"/>
</dbReference>
<dbReference type="HOGENOM" id="CLU_100552_2_0_0"/>
<dbReference type="OrthoDB" id="9806643at2"/>
<dbReference type="Proteomes" id="UP000002382">
    <property type="component" value="Chromosome"/>
</dbReference>
<dbReference type="GO" id="GO:0005737">
    <property type="term" value="C:cytoplasm"/>
    <property type="evidence" value="ECO:0007669"/>
    <property type="project" value="UniProtKB-SubCell"/>
</dbReference>
<dbReference type="GO" id="GO:0070038">
    <property type="term" value="F:rRNA (pseudouridine-N3-)-methyltransferase activity"/>
    <property type="evidence" value="ECO:0007669"/>
    <property type="project" value="UniProtKB-UniRule"/>
</dbReference>
<dbReference type="CDD" id="cd18081">
    <property type="entry name" value="RlmH-like"/>
    <property type="match status" value="1"/>
</dbReference>
<dbReference type="Gene3D" id="3.40.1280.10">
    <property type="match status" value="1"/>
</dbReference>
<dbReference type="HAMAP" id="MF_00658">
    <property type="entry name" value="23SrRNA_methyltr_H"/>
    <property type="match status" value="1"/>
</dbReference>
<dbReference type="InterPro" id="IPR029028">
    <property type="entry name" value="Alpha/beta_knot_MTases"/>
</dbReference>
<dbReference type="InterPro" id="IPR003742">
    <property type="entry name" value="RlmH-like"/>
</dbReference>
<dbReference type="InterPro" id="IPR029026">
    <property type="entry name" value="tRNA_m1G_MTases_N"/>
</dbReference>
<dbReference type="PANTHER" id="PTHR33603">
    <property type="entry name" value="METHYLTRANSFERASE"/>
    <property type="match status" value="1"/>
</dbReference>
<dbReference type="PANTHER" id="PTHR33603:SF1">
    <property type="entry name" value="RIBOSOMAL RNA LARGE SUBUNIT METHYLTRANSFERASE H"/>
    <property type="match status" value="1"/>
</dbReference>
<dbReference type="Pfam" id="PF02590">
    <property type="entry name" value="SPOUT_MTase"/>
    <property type="match status" value="1"/>
</dbReference>
<dbReference type="PIRSF" id="PIRSF004505">
    <property type="entry name" value="MT_bac"/>
    <property type="match status" value="1"/>
</dbReference>
<dbReference type="SUPFAM" id="SSF75217">
    <property type="entry name" value="alpha/beta knot"/>
    <property type="match status" value="1"/>
</dbReference>
<organism>
    <name type="scientific">Kosmotoga olearia (strain ATCC BAA-1733 / DSM 21960 / TBF 19.5.1)</name>
    <dbReference type="NCBI Taxonomy" id="521045"/>
    <lineage>
        <taxon>Bacteria</taxon>
        <taxon>Thermotogati</taxon>
        <taxon>Thermotogota</taxon>
        <taxon>Thermotogae</taxon>
        <taxon>Kosmotogales</taxon>
        <taxon>Kosmotogaceae</taxon>
        <taxon>Kosmotoga</taxon>
    </lineage>
</organism>
<feature type="chain" id="PRO_1000212458" description="Ribosomal RNA large subunit methyltransferase H">
    <location>
        <begin position="1"/>
        <end position="155"/>
    </location>
</feature>
<feature type="binding site" evidence="1">
    <location>
        <position position="72"/>
    </location>
    <ligand>
        <name>S-adenosyl-L-methionine</name>
        <dbReference type="ChEBI" id="CHEBI:59789"/>
    </ligand>
</feature>
<feature type="binding site" evidence="1">
    <location>
        <position position="104"/>
    </location>
    <ligand>
        <name>S-adenosyl-L-methionine</name>
        <dbReference type="ChEBI" id="CHEBI:59789"/>
    </ligand>
</feature>
<feature type="binding site" evidence="1">
    <location>
        <begin position="123"/>
        <end position="128"/>
    </location>
    <ligand>
        <name>S-adenosyl-L-methionine</name>
        <dbReference type="ChEBI" id="CHEBI:59789"/>
    </ligand>
</feature>
<sequence>MNLEIYLTGKVKTKFILEGVEQYLKWIRPYHKIKITSFPLAGSTSANRDQIKKKEGERYLKALQNEKNVVVLHERGEELSSMEFATFIKKWQNSGTRKLIFIIGGPLGFSDNVLSQNWKKLSLSRMTFTHEMALLVLLEQLYRAETINRGMIYHY</sequence>
<accession>C5CFQ6</accession>
<proteinExistence type="inferred from homology"/>
<name>RLMH_KOSOT</name>